<feature type="chain" id="PRO_0000304145" description="DNA helicase MCM9">
    <location>
        <begin position="1"/>
        <end position="1143"/>
    </location>
</feature>
<feature type="domain" description="MCM">
    <location>
        <begin position="301"/>
        <end position="506"/>
    </location>
</feature>
<feature type="region of interest" description="Disordered" evidence="3">
    <location>
        <begin position="721"/>
        <end position="767"/>
    </location>
</feature>
<feature type="region of interest" description="Disordered" evidence="3">
    <location>
        <begin position="838"/>
        <end position="864"/>
    </location>
</feature>
<feature type="region of interest" description="Disordered" evidence="3">
    <location>
        <begin position="895"/>
        <end position="915"/>
    </location>
</feature>
<feature type="region of interest" description="Disordered" evidence="3">
    <location>
        <begin position="998"/>
        <end position="1022"/>
    </location>
</feature>
<feature type="compositionally biased region" description="Polar residues" evidence="3">
    <location>
        <begin position="736"/>
        <end position="756"/>
    </location>
</feature>
<feature type="compositionally biased region" description="Polar residues" evidence="3">
    <location>
        <begin position="851"/>
        <end position="860"/>
    </location>
</feature>
<feature type="compositionally biased region" description="Polar residues" evidence="3">
    <location>
        <begin position="895"/>
        <end position="905"/>
    </location>
</feature>
<feature type="compositionally biased region" description="Low complexity" evidence="3">
    <location>
        <begin position="999"/>
        <end position="1012"/>
    </location>
</feature>
<feature type="binding site" evidence="2">
    <location>
        <begin position="353"/>
        <end position="360"/>
    </location>
    <ligand>
        <name>ATP</name>
        <dbReference type="ChEBI" id="CHEBI:30616"/>
    </ligand>
</feature>
<protein>
    <recommendedName>
        <fullName>DNA helicase MCM9</fullName>
        <ecNumber>3.6.4.12</ecNumber>
    </recommendedName>
    <alternativeName>
        <fullName>Minichromosome maintenance 9</fullName>
    </alternativeName>
</protein>
<accession>Q6NRM6</accession>
<proteinExistence type="evidence at protein level"/>
<organism>
    <name type="scientific">Xenopus laevis</name>
    <name type="common">African clawed frog</name>
    <dbReference type="NCBI Taxonomy" id="8355"/>
    <lineage>
        <taxon>Eukaryota</taxon>
        <taxon>Metazoa</taxon>
        <taxon>Chordata</taxon>
        <taxon>Craniata</taxon>
        <taxon>Vertebrata</taxon>
        <taxon>Euteleostomi</taxon>
        <taxon>Amphibia</taxon>
        <taxon>Batrachia</taxon>
        <taxon>Anura</taxon>
        <taxon>Pipoidea</taxon>
        <taxon>Pipidae</taxon>
        <taxon>Xenopodinae</taxon>
        <taxon>Xenopus</taxon>
        <taxon>Xenopus</taxon>
    </lineage>
</organism>
<comment type="function">
    <text evidence="1 4">Component of the MCM8-MCM9 complex, a complex involved in homologous recombination repair following DNA interstrand cross-links and plays a key role during gametogenesis. The MCM8-MCM9 complex probably acts as a hexameric helicase required to process aberrant forks into homologous recombination substrates and to orchestrate homologous recombination with resection, fork stabilization and fork restart (By similarity). In eggs, required for MCM2-7 loading onto chromatin during DNA replication. Probably not required for DNA replication in other cells.</text>
</comment>
<comment type="catalytic activity">
    <reaction>
        <text>ATP + H2O = ADP + phosphate + H(+)</text>
        <dbReference type="Rhea" id="RHEA:13065"/>
        <dbReference type="ChEBI" id="CHEBI:15377"/>
        <dbReference type="ChEBI" id="CHEBI:15378"/>
        <dbReference type="ChEBI" id="CHEBI:30616"/>
        <dbReference type="ChEBI" id="CHEBI:43474"/>
        <dbReference type="ChEBI" id="CHEBI:456216"/>
        <dbReference type="EC" id="3.6.4.12"/>
    </reaction>
</comment>
<comment type="subunit">
    <text evidence="1 4">Component of the MCM8-MCM9 complex, which forms a hexamer composed of mcm8 and mcm9 (By similarity). Interacts with cdt1.</text>
</comment>
<comment type="subcellular location">
    <subcellularLocation>
        <location evidence="1">Nucleus</location>
    </subcellularLocation>
    <text evidence="1">Localizes to nuclear foci and colocalizes with rad51.</text>
</comment>
<comment type="similarity">
    <text evidence="5">Belongs to the MCM family.</text>
</comment>
<evidence type="ECO:0000250" key="1"/>
<evidence type="ECO:0000255" key="2"/>
<evidence type="ECO:0000256" key="3">
    <source>
        <dbReference type="SAM" id="MobiDB-lite"/>
    </source>
</evidence>
<evidence type="ECO:0000269" key="4">
    <source>
    </source>
</evidence>
<evidence type="ECO:0000305" key="5"/>
<name>MCM9_XENLA</name>
<keyword id="KW-0067">ATP-binding</keyword>
<keyword id="KW-0227">DNA damage</keyword>
<keyword id="KW-0234">DNA repair</keyword>
<keyword id="KW-0235">DNA replication</keyword>
<keyword id="KW-0238">DNA-binding</keyword>
<keyword id="KW-0347">Helicase</keyword>
<keyword id="KW-0378">Hydrolase</keyword>
<keyword id="KW-0547">Nucleotide-binding</keyword>
<keyword id="KW-0539">Nucleus</keyword>
<keyword id="KW-1185">Reference proteome</keyword>
<gene>
    <name type="primary">mcm9</name>
</gene>
<reference key="1">
    <citation type="submission" date="2004-05" db="EMBL/GenBank/DDBJ databases">
        <authorList>
            <consortium name="NIH - Xenopus Gene Collection (XGC) project"/>
        </authorList>
    </citation>
    <scope>NUCLEOTIDE SEQUENCE [LARGE SCALE MRNA]</scope>
    <source>
        <tissue>Oocyte</tissue>
    </source>
</reference>
<reference key="2">
    <citation type="journal article" date="2005" name="Gene">
        <title>Identification of full genes and proteins of MCM9, a novel, vertebrate-specific member of the MCM2-8 protein family.</title>
        <authorList>
            <person name="Lutzmann M."/>
            <person name="Maiorano D."/>
            <person name="Mechali M."/>
        </authorList>
    </citation>
    <scope>IDENTIFICATION</scope>
</reference>
<reference key="3">
    <citation type="journal article" date="2008" name="Mol. Cell">
        <title>MCM9 binds Cdt1 and is required for the assembly of prereplication complexes.</title>
        <authorList>
            <person name="Lutzmann M."/>
            <person name="Mechali M."/>
        </authorList>
    </citation>
    <scope>FUNCTION</scope>
    <scope>INTERACTION WITH CDT1</scope>
</reference>
<dbReference type="EC" id="3.6.4.12"/>
<dbReference type="EMBL" id="BC070720">
    <property type="protein sequence ID" value="AAH70720.1"/>
    <property type="molecule type" value="mRNA"/>
</dbReference>
<dbReference type="EMBL" id="BN000881">
    <property type="protein sequence ID" value="CAJ70647.1"/>
    <property type="molecule type" value="mRNA"/>
</dbReference>
<dbReference type="RefSeq" id="NP_001084773.1">
    <property type="nucleotide sequence ID" value="NM_001091304.1"/>
</dbReference>
<dbReference type="SMR" id="Q6NRM6"/>
<dbReference type="BioGRID" id="101175">
    <property type="interactions" value="3"/>
</dbReference>
<dbReference type="DNASU" id="431809"/>
<dbReference type="GeneID" id="431809"/>
<dbReference type="KEGG" id="xla:431809"/>
<dbReference type="AGR" id="Xenbase:XB-GENE-949289"/>
<dbReference type="CTD" id="431809"/>
<dbReference type="Xenbase" id="XB-GENE-949289">
    <property type="gene designation" value="mcm9.L"/>
</dbReference>
<dbReference type="OrthoDB" id="271325at2759"/>
<dbReference type="Proteomes" id="UP000186698">
    <property type="component" value="Chromosome 5L"/>
</dbReference>
<dbReference type="Bgee" id="431809">
    <property type="expression patterns" value="Expressed in egg cell and 14 other cell types or tissues"/>
</dbReference>
<dbReference type="GO" id="GO:0042555">
    <property type="term" value="C:MCM complex"/>
    <property type="evidence" value="ECO:0000318"/>
    <property type="project" value="GO_Central"/>
</dbReference>
<dbReference type="GO" id="GO:0097362">
    <property type="term" value="C:MCM8-MCM9 complex"/>
    <property type="evidence" value="ECO:0000250"/>
    <property type="project" value="UniProtKB"/>
</dbReference>
<dbReference type="GO" id="GO:0005634">
    <property type="term" value="C:nucleus"/>
    <property type="evidence" value="ECO:0000318"/>
    <property type="project" value="GO_Central"/>
</dbReference>
<dbReference type="GO" id="GO:0005524">
    <property type="term" value="F:ATP binding"/>
    <property type="evidence" value="ECO:0007669"/>
    <property type="project" value="UniProtKB-KW"/>
</dbReference>
<dbReference type="GO" id="GO:0016887">
    <property type="term" value="F:ATP hydrolysis activity"/>
    <property type="evidence" value="ECO:0007669"/>
    <property type="project" value="InterPro"/>
</dbReference>
<dbReference type="GO" id="GO:0003697">
    <property type="term" value="F:single-stranded DNA binding"/>
    <property type="evidence" value="ECO:0000318"/>
    <property type="project" value="GO_Central"/>
</dbReference>
<dbReference type="GO" id="GO:0017116">
    <property type="term" value="F:single-stranded DNA helicase activity"/>
    <property type="evidence" value="ECO:0007669"/>
    <property type="project" value="TreeGrafter"/>
</dbReference>
<dbReference type="GO" id="GO:0006974">
    <property type="term" value="P:DNA damage response"/>
    <property type="evidence" value="ECO:0000250"/>
    <property type="project" value="UniProtKB"/>
</dbReference>
<dbReference type="GO" id="GO:0006260">
    <property type="term" value="P:DNA replication"/>
    <property type="evidence" value="ECO:0007669"/>
    <property type="project" value="UniProtKB-KW"/>
</dbReference>
<dbReference type="GO" id="GO:0000724">
    <property type="term" value="P:double-strand break repair via homologous recombination"/>
    <property type="evidence" value="ECO:0000250"/>
    <property type="project" value="UniProtKB"/>
</dbReference>
<dbReference type="GO" id="GO:0030174">
    <property type="term" value="P:regulation of DNA-templated DNA replication initiation"/>
    <property type="evidence" value="ECO:0007669"/>
    <property type="project" value="UniProtKB-ARBA"/>
</dbReference>
<dbReference type="CDD" id="cd17760">
    <property type="entry name" value="MCM9"/>
    <property type="match status" value="1"/>
</dbReference>
<dbReference type="FunFam" id="3.40.50.300:FF:000671">
    <property type="entry name" value="DNA helicase MCM9 isoform X1"/>
    <property type="match status" value="1"/>
</dbReference>
<dbReference type="FunFam" id="2.20.28.10:FF:000019">
    <property type="entry name" value="Dna replication licensing factor mcm9 mini-chromosome maintenance deficient 9 hmcm9 mini-chromosome maintenance deficient domain-containing protein"/>
    <property type="match status" value="1"/>
</dbReference>
<dbReference type="FunFam" id="2.40.50.140:FF:000120">
    <property type="entry name" value="Probable DNA helicase MCM9"/>
    <property type="match status" value="1"/>
</dbReference>
<dbReference type="Gene3D" id="2.20.28.10">
    <property type="match status" value="1"/>
</dbReference>
<dbReference type="Gene3D" id="2.40.50.140">
    <property type="entry name" value="Nucleic acid-binding proteins"/>
    <property type="match status" value="1"/>
</dbReference>
<dbReference type="Gene3D" id="3.40.50.300">
    <property type="entry name" value="P-loop containing nucleotide triphosphate hydrolases"/>
    <property type="match status" value="1"/>
</dbReference>
<dbReference type="InterPro" id="IPR003593">
    <property type="entry name" value="AAA+_ATPase"/>
</dbReference>
<dbReference type="InterPro" id="IPR031327">
    <property type="entry name" value="MCM"/>
</dbReference>
<dbReference type="InterPro" id="IPR001208">
    <property type="entry name" value="MCM_dom"/>
</dbReference>
<dbReference type="InterPro" id="IPR041562">
    <property type="entry name" value="MCM_lid"/>
</dbReference>
<dbReference type="InterPro" id="IPR033762">
    <property type="entry name" value="MCM_OB"/>
</dbReference>
<dbReference type="InterPro" id="IPR012340">
    <property type="entry name" value="NA-bd_OB-fold"/>
</dbReference>
<dbReference type="InterPro" id="IPR027417">
    <property type="entry name" value="P-loop_NTPase"/>
</dbReference>
<dbReference type="PANTHER" id="PTHR11630:SF48">
    <property type="entry name" value="DNA HELICASE MCM9"/>
    <property type="match status" value="1"/>
</dbReference>
<dbReference type="PANTHER" id="PTHR11630">
    <property type="entry name" value="DNA REPLICATION LICENSING FACTOR MCM FAMILY MEMBER"/>
    <property type="match status" value="1"/>
</dbReference>
<dbReference type="Pfam" id="PF00493">
    <property type="entry name" value="MCM"/>
    <property type="match status" value="1"/>
</dbReference>
<dbReference type="Pfam" id="PF17855">
    <property type="entry name" value="MCM_lid"/>
    <property type="match status" value="1"/>
</dbReference>
<dbReference type="Pfam" id="PF17207">
    <property type="entry name" value="MCM_OB"/>
    <property type="match status" value="1"/>
</dbReference>
<dbReference type="PRINTS" id="PR01657">
    <property type="entry name" value="MCMFAMILY"/>
</dbReference>
<dbReference type="SMART" id="SM00382">
    <property type="entry name" value="AAA"/>
    <property type="match status" value="1"/>
</dbReference>
<dbReference type="SMART" id="SM00350">
    <property type="entry name" value="MCM"/>
    <property type="match status" value="1"/>
</dbReference>
<dbReference type="SUPFAM" id="SSF50249">
    <property type="entry name" value="Nucleic acid-binding proteins"/>
    <property type="match status" value="1"/>
</dbReference>
<dbReference type="SUPFAM" id="SSF52540">
    <property type="entry name" value="P-loop containing nucleoside triphosphate hydrolases"/>
    <property type="match status" value="1"/>
</dbReference>
<dbReference type="PROSITE" id="PS50051">
    <property type="entry name" value="MCM_2"/>
    <property type="match status" value="1"/>
</dbReference>
<sequence length="1143" mass="126594">MYLGFEQVALVGQVFESFVLEHHKNEIAQILTEKEEHAHYSLVVNAMTLFEANMEIGEYFNAFPNEVLPVFDNALRCAAMSFLQSCSEKYTFLMKQNLHARITGLPVCPELTREHIPRTRDVGHFLSVTGTVIRTSLVKVLEYEQDFMCNKCKHVVTVKADFEQHYTFKPPIACSNEEGCNSTKFTCLSDSSSPASCRDYQEIKIQEQVQRLSVGSIPRSMIVVLEDDLVDSCKSGDDITVYGVVMQRWKPLYIDMRCDLEIVLKANYISVNNEQPCGVVINEEVRKEYEDFWVKYRNNPLEGRNEILASLCPQVFGMFVVKLAVAMVLAGGVQRIDSAGTRVRGESHLLLVGDPGTGKSQFLKYAAKITPRSVLTAGIGSTSAGLTVTAVKDSGEWNLEAGALVLADGGLCCIDEFNSIKEHDRTSIHEAMEQQTISVAKAGLVCKLNTRTTILAATNPKGQYDPDESISVNVALASPLLSRFDLVLVLLDTKNEDWDRIISSFILESKGCPRKSDKLWSMEKMKTYFCLIKNLQPKMSQDANVILVRYYQLQRQSSCRNAARTTIRLLESLIRLAEAHARIMYRDVVTTEDAITVVSIMESSMQGGALLGGVNALHTSFPENPREQYRLQCELLLDKLGLQKLLEEELQRLERQQSEDSLESDLGESATNLVGHKVVHSECVMEETFSTFEASSLPDETHLGVTGSAAFIQTPKKTISDMTKSDDTIRKGTITPAEQNRGISTDAESSLKQGNAQPLAGGHLSENNLTKCTDNSLGWFDTLQSIQMSPITKQREGCTAEKLQQEVLPVSTESSCHPADKKVVNLGGRNKLEVLQASGSSPGGNGRDLSNHTVTCGSSPERNKRDLSNHIVTEHVSKKWRRINKDSLCGKNVPSFQPQSENTDSAPVCSSVPLHSTPDVAQRRKRIIAQVEKQSKAEVEDPDTKARLAQLAKFSFKRHSKLVHSPAGDTDTASNAQKHDHPVQKITLSEKLNNLGRTVNNVDKSSNSVNGSKQQKHVENTSKQTVITQKSNFESNTLNAPVHETKLNEGCDSRKVSSSTLAKLARFSFSPPPENQAAETSKETLILPRAVAPGSKRKCFELNPSTDKTTMSSKSLFSTTDLDDEELDVDWEAEIKGNQRIAT</sequence>